<proteinExistence type="inferred from homology"/>
<sequence length="154" mass="16025">MRIIEGNLVGTGLKIGIVVSRFNEFITGKLLSGAIDGLTRHGVSDSDITVAWVPGAFEIPLVAKKMAESKQFDAVITLGAVIRGATSHFDYVCSEAAKGVSHAALASGVPVIFGVLTTDTIEQAIERAGTKAGNKGWEAAVSAIEMANVLRTLA</sequence>
<protein>
    <recommendedName>
        <fullName evidence="1">6,7-dimethyl-8-ribityllumazine synthase</fullName>
        <shortName evidence="1">DMRL synthase</shortName>
        <shortName evidence="1">LS</shortName>
        <shortName evidence="1">Lumazine synthase</shortName>
        <ecNumber evidence="1">2.5.1.78</ecNumber>
    </recommendedName>
</protein>
<keyword id="KW-1185">Reference proteome</keyword>
<keyword id="KW-0686">Riboflavin biosynthesis</keyword>
<keyword id="KW-0808">Transferase</keyword>
<gene>
    <name evidence="1" type="primary">ribH</name>
    <name type="ordered locus">GK2294</name>
</gene>
<feature type="chain" id="PRO_1000040423" description="6,7-dimethyl-8-ribityllumazine synthase">
    <location>
        <begin position="1"/>
        <end position="154"/>
    </location>
</feature>
<feature type="active site" description="Proton donor" evidence="1">
    <location>
        <position position="88"/>
    </location>
</feature>
<feature type="binding site" evidence="1">
    <location>
        <position position="22"/>
    </location>
    <ligand>
        <name>5-amino-6-(D-ribitylamino)uracil</name>
        <dbReference type="ChEBI" id="CHEBI:15934"/>
    </ligand>
</feature>
<feature type="binding site" evidence="1">
    <location>
        <begin position="56"/>
        <end position="58"/>
    </location>
    <ligand>
        <name>5-amino-6-(D-ribitylamino)uracil</name>
        <dbReference type="ChEBI" id="CHEBI:15934"/>
    </ligand>
</feature>
<feature type="binding site" evidence="1">
    <location>
        <begin position="80"/>
        <end position="82"/>
    </location>
    <ligand>
        <name>5-amino-6-(D-ribitylamino)uracil</name>
        <dbReference type="ChEBI" id="CHEBI:15934"/>
    </ligand>
</feature>
<feature type="binding site" evidence="1">
    <location>
        <begin position="85"/>
        <end position="86"/>
    </location>
    <ligand>
        <name>(2S)-2-hydroxy-3-oxobutyl phosphate</name>
        <dbReference type="ChEBI" id="CHEBI:58830"/>
    </ligand>
</feature>
<feature type="binding site" evidence="1">
    <location>
        <position position="113"/>
    </location>
    <ligand>
        <name>5-amino-6-(D-ribitylamino)uracil</name>
        <dbReference type="ChEBI" id="CHEBI:15934"/>
    </ligand>
</feature>
<feature type="binding site" evidence="1">
    <location>
        <position position="127"/>
    </location>
    <ligand>
        <name>(2S)-2-hydroxy-3-oxobutyl phosphate</name>
        <dbReference type="ChEBI" id="CHEBI:58830"/>
    </ligand>
</feature>
<organism>
    <name type="scientific">Geobacillus kaustophilus (strain HTA426)</name>
    <dbReference type="NCBI Taxonomy" id="235909"/>
    <lineage>
        <taxon>Bacteria</taxon>
        <taxon>Bacillati</taxon>
        <taxon>Bacillota</taxon>
        <taxon>Bacilli</taxon>
        <taxon>Bacillales</taxon>
        <taxon>Anoxybacillaceae</taxon>
        <taxon>Geobacillus</taxon>
        <taxon>Geobacillus thermoleovorans group</taxon>
    </lineage>
</organism>
<evidence type="ECO:0000255" key="1">
    <source>
        <dbReference type="HAMAP-Rule" id="MF_00178"/>
    </source>
</evidence>
<name>RISB_GEOKA</name>
<accession>Q5KXK7</accession>
<reference key="1">
    <citation type="journal article" date="2004" name="Nucleic Acids Res.">
        <title>Thermoadaptation trait revealed by the genome sequence of thermophilic Geobacillus kaustophilus.</title>
        <authorList>
            <person name="Takami H."/>
            <person name="Takaki Y."/>
            <person name="Chee G.-J."/>
            <person name="Nishi S."/>
            <person name="Shimamura S."/>
            <person name="Suzuki H."/>
            <person name="Matsui S."/>
            <person name="Uchiyama I."/>
        </authorList>
    </citation>
    <scope>NUCLEOTIDE SEQUENCE [LARGE SCALE GENOMIC DNA]</scope>
    <source>
        <strain>HTA426</strain>
    </source>
</reference>
<dbReference type="EC" id="2.5.1.78" evidence="1"/>
<dbReference type="EMBL" id="BA000043">
    <property type="protein sequence ID" value="BAD76579.1"/>
    <property type="molecule type" value="Genomic_DNA"/>
</dbReference>
<dbReference type="SMR" id="Q5KXK7"/>
<dbReference type="STRING" id="235909.GK2294"/>
<dbReference type="KEGG" id="gka:GK2294"/>
<dbReference type="eggNOG" id="COG0054">
    <property type="taxonomic scope" value="Bacteria"/>
</dbReference>
<dbReference type="HOGENOM" id="CLU_089358_1_1_9"/>
<dbReference type="UniPathway" id="UPA00275">
    <property type="reaction ID" value="UER00404"/>
</dbReference>
<dbReference type="Proteomes" id="UP000001172">
    <property type="component" value="Chromosome"/>
</dbReference>
<dbReference type="GO" id="GO:0005829">
    <property type="term" value="C:cytosol"/>
    <property type="evidence" value="ECO:0007669"/>
    <property type="project" value="TreeGrafter"/>
</dbReference>
<dbReference type="GO" id="GO:0009349">
    <property type="term" value="C:riboflavin synthase complex"/>
    <property type="evidence" value="ECO:0007669"/>
    <property type="project" value="InterPro"/>
</dbReference>
<dbReference type="GO" id="GO:0000906">
    <property type="term" value="F:6,7-dimethyl-8-ribityllumazine synthase activity"/>
    <property type="evidence" value="ECO:0007669"/>
    <property type="project" value="UniProtKB-UniRule"/>
</dbReference>
<dbReference type="GO" id="GO:0009231">
    <property type="term" value="P:riboflavin biosynthetic process"/>
    <property type="evidence" value="ECO:0007669"/>
    <property type="project" value="UniProtKB-UniRule"/>
</dbReference>
<dbReference type="CDD" id="cd09209">
    <property type="entry name" value="Lumazine_synthase-I"/>
    <property type="match status" value="1"/>
</dbReference>
<dbReference type="FunFam" id="3.40.50.960:FF:000001">
    <property type="entry name" value="6,7-dimethyl-8-ribityllumazine synthase"/>
    <property type="match status" value="1"/>
</dbReference>
<dbReference type="Gene3D" id="3.40.50.960">
    <property type="entry name" value="Lumazine/riboflavin synthase"/>
    <property type="match status" value="1"/>
</dbReference>
<dbReference type="HAMAP" id="MF_00178">
    <property type="entry name" value="Lumazine_synth"/>
    <property type="match status" value="1"/>
</dbReference>
<dbReference type="InterPro" id="IPR034964">
    <property type="entry name" value="LS"/>
</dbReference>
<dbReference type="InterPro" id="IPR002180">
    <property type="entry name" value="LS/RS"/>
</dbReference>
<dbReference type="InterPro" id="IPR036467">
    <property type="entry name" value="LS/RS_sf"/>
</dbReference>
<dbReference type="NCBIfam" id="TIGR00114">
    <property type="entry name" value="lumazine-synth"/>
    <property type="match status" value="1"/>
</dbReference>
<dbReference type="NCBIfam" id="NF000812">
    <property type="entry name" value="PRK00061.1-4"/>
    <property type="match status" value="1"/>
</dbReference>
<dbReference type="PANTHER" id="PTHR21058:SF0">
    <property type="entry name" value="6,7-DIMETHYL-8-RIBITYLLUMAZINE SYNTHASE"/>
    <property type="match status" value="1"/>
</dbReference>
<dbReference type="PANTHER" id="PTHR21058">
    <property type="entry name" value="6,7-DIMETHYL-8-RIBITYLLUMAZINE SYNTHASE DMRL SYNTHASE LUMAZINE SYNTHASE"/>
    <property type="match status" value="1"/>
</dbReference>
<dbReference type="Pfam" id="PF00885">
    <property type="entry name" value="DMRL_synthase"/>
    <property type="match status" value="1"/>
</dbReference>
<dbReference type="SUPFAM" id="SSF52121">
    <property type="entry name" value="Lumazine synthase"/>
    <property type="match status" value="1"/>
</dbReference>
<comment type="function">
    <text evidence="1">Catalyzes the formation of 6,7-dimethyl-8-ribityllumazine by condensation of 5-amino-6-(D-ribitylamino)uracil with 3,4-dihydroxy-2-butanone 4-phosphate. This is the penultimate step in the biosynthesis of riboflavin.</text>
</comment>
<comment type="catalytic activity">
    <reaction evidence="1">
        <text>(2S)-2-hydroxy-3-oxobutyl phosphate + 5-amino-6-(D-ribitylamino)uracil = 6,7-dimethyl-8-(1-D-ribityl)lumazine + phosphate + 2 H2O + H(+)</text>
        <dbReference type="Rhea" id="RHEA:26152"/>
        <dbReference type="ChEBI" id="CHEBI:15377"/>
        <dbReference type="ChEBI" id="CHEBI:15378"/>
        <dbReference type="ChEBI" id="CHEBI:15934"/>
        <dbReference type="ChEBI" id="CHEBI:43474"/>
        <dbReference type="ChEBI" id="CHEBI:58201"/>
        <dbReference type="ChEBI" id="CHEBI:58830"/>
        <dbReference type="EC" id="2.5.1.78"/>
    </reaction>
</comment>
<comment type="pathway">
    <text evidence="1">Cofactor biosynthesis; riboflavin biosynthesis; riboflavin from 2-hydroxy-3-oxobutyl phosphate and 5-amino-6-(D-ribitylamino)uracil: step 1/2.</text>
</comment>
<comment type="subunit">
    <text evidence="1">Forms an icosahedral capsid composed of 60 subunits, arranged as a dodecamer of pentamers.</text>
</comment>
<comment type="similarity">
    <text evidence="1">Belongs to the DMRL synthase family.</text>
</comment>